<gene>
    <name evidence="1" type="primary">rpsS</name>
    <name type="ordered locus">MRA_0713</name>
</gene>
<name>RS19_MYCTA</name>
<protein>
    <recommendedName>
        <fullName evidence="1">Small ribosomal subunit protein uS19</fullName>
    </recommendedName>
    <alternativeName>
        <fullName evidence="2">30S ribosomal protein S19</fullName>
    </alternativeName>
</protein>
<evidence type="ECO:0000255" key="1">
    <source>
        <dbReference type="HAMAP-Rule" id="MF_00531"/>
    </source>
</evidence>
<evidence type="ECO:0000305" key="2"/>
<proteinExistence type="inferred from homology"/>
<keyword id="KW-1185">Reference proteome</keyword>
<keyword id="KW-0687">Ribonucleoprotein</keyword>
<keyword id="KW-0689">Ribosomal protein</keyword>
<keyword id="KW-0694">RNA-binding</keyword>
<keyword id="KW-0699">rRNA-binding</keyword>
<sequence>MPRSLKKGPFVDEHLLKKVDVQNEKNTKQVIKTWSRRSTIIPDFIGHTFAVHDGRKHVPVFVTESMVGHKLGEFAPTRTFKGHIKDDRKSKRR</sequence>
<organism>
    <name type="scientific">Mycobacterium tuberculosis (strain ATCC 25177 / H37Ra)</name>
    <dbReference type="NCBI Taxonomy" id="419947"/>
    <lineage>
        <taxon>Bacteria</taxon>
        <taxon>Bacillati</taxon>
        <taxon>Actinomycetota</taxon>
        <taxon>Actinomycetes</taxon>
        <taxon>Mycobacteriales</taxon>
        <taxon>Mycobacteriaceae</taxon>
        <taxon>Mycobacterium</taxon>
        <taxon>Mycobacterium tuberculosis complex</taxon>
    </lineage>
</organism>
<dbReference type="EMBL" id="CP000611">
    <property type="protein sequence ID" value="ABQ72441.1"/>
    <property type="molecule type" value="Genomic_DNA"/>
</dbReference>
<dbReference type="RefSeq" id="WP_003403584.1">
    <property type="nucleotide sequence ID" value="NZ_CP016972.1"/>
</dbReference>
<dbReference type="SMR" id="A5U091"/>
<dbReference type="GeneID" id="45424670"/>
<dbReference type="KEGG" id="mra:MRA_0713"/>
<dbReference type="eggNOG" id="COG0185">
    <property type="taxonomic scope" value="Bacteria"/>
</dbReference>
<dbReference type="HOGENOM" id="CLU_144911_0_1_11"/>
<dbReference type="Proteomes" id="UP000001988">
    <property type="component" value="Chromosome"/>
</dbReference>
<dbReference type="GO" id="GO:0005737">
    <property type="term" value="C:cytoplasm"/>
    <property type="evidence" value="ECO:0007669"/>
    <property type="project" value="UniProtKB-ARBA"/>
</dbReference>
<dbReference type="GO" id="GO:0015935">
    <property type="term" value="C:small ribosomal subunit"/>
    <property type="evidence" value="ECO:0007669"/>
    <property type="project" value="InterPro"/>
</dbReference>
<dbReference type="GO" id="GO:0019843">
    <property type="term" value="F:rRNA binding"/>
    <property type="evidence" value="ECO:0007669"/>
    <property type="project" value="UniProtKB-UniRule"/>
</dbReference>
<dbReference type="GO" id="GO:0003735">
    <property type="term" value="F:structural constituent of ribosome"/>
    <property type="evidence" value="ECO:0007669"/>
    <property type="project" value="InterPro"/>
</dbReference>
<dbReference type="GO" id="GO:0000028">
    <property type="term" value="P:ribosomal small subunit assembly"/>
    <property type="evidence" value="ECO:0007669"/>
    <property type="project" value="TreeGrafter"/>
</dbReference>
<dbReference type="GO" id="GO:0006412">
    <property type="term" value="P:translation"/>
    <property type="evidence" value="ECO:0007669"/>
    <property type="project" value="UniProtKB-UniRule"/>
</dbReference>
<dbReference type="FunFam" id="3.30.860.10:FF:000001">
    <property type="entry name" value="30S ribosomal protein S19"/>
    <property type="match status" value="1"/>
</dbReference>
<dbReference type="Gene3D" id="3.30.860.10">
    <property type="entry name" value="30s Ribosomal Protein S19, Chain A"/>
    <property type="match status" value="1"/>
</dbReference>
<dbReference type="HAMAP" id="MF_00531">
    <property type="entry name" value="Ribosomal_uS19"/>
    <property type="match status" value="1"/>
</dbReference>
<dbReference type="InterPro" id="IPR002222">
    <property type="entry name" value="Ribosomal_uS19"/>
</dbReference>
<dbReference type="InterPro" id="IPR005732">
    <property type="entry name" value="Ribosomal_uS19_bac-type"/>
</dbReference>
<dbReference type="InterPro" id="IPR020934">
    <property type="entry name" value="Ribosomal_uS19_CS"/>
</dbReference>
<dbReference type="InterPro" id="IPR023575">
    <property type="entry name" value="Ribosomal_uS19_SF"/>
</dbReference>
<dbReference type="NCBIfam" id="TIGR01050">
    <property type="entry name" value="rpsS_bact"/>
    <property type="match status" value="1"/>
</dbReference>
<dbReference type="PANTHER" id="PTHR11880">
    <property type="entry name" value="RIBOSOMAL PROTEIN S19P FAMILY MEMBER"/>
    <property type="match status" value="1"/>
</dbReference>
<dbReference type="PANTHER" id="PTHR11880:SF8">
    <property type="entry name" value="SMALL RIBOSOMAL SUBUNIT PROTEIN US19M"/>
    <property type="match status" value="1"/>
</dbReference>
<dbReference type="Pfam" id="PF00203">
    <property type="entry name" value="Ribosomal_S19"/>
    <property type="match status" value="1"/>
</dbReference>
<dbReference type="PIRSF" id="PIRSF002144">
    <property type="entry name" value="Ribosomal_S19"/>
    <property type="match status" value="1"/>
</dbReference>
<dbReference type="PRINTS" id="PR00975">
    <property type="entry name" value="RIBOSOMALS19"/>
</dbReference>
<dbReference type="SUPFAM" id="SSF54570">
    <property type="entry name" value="Ribosomal protein S19"/>
    <property type="match status" value="1"/>
</dbReference>
<dbReference type="PROSITE" id="PS00323">
    <property type="entry name" value="RIBOSOMAL_S19"/>
    <property type="match status" value="1"/>
</dbReference>
<comment type="function">
    <text evidence="1">Protein S19 forms a complex with S13 that binds strongly to the 16S ribosomal RNA.</text>
</comment>
<comment type="similarity">
    <text evidence="1">Belongs to the universal ribosomal protein uS19 family.</text>
</comment>
<feature type="chain" id="PRO_1000051082" description="Small ribosomal subunit protein uS19">
    <location>
        <begin position="1"/>
        <end position="93"/>
    </location>
</feature>
<accession>A5U091</accession>
<reference key="1">
    <citation type="journal article" date="2008" name="PLoS ONE">
        <title>Genetic basis of virulence attenuation revealed by comparative genomic analysis of Mycobacterium tuberculosis strain H37Ra versus H37Rv.</title>
        <authorList>
            <person name="Zheng H."/>
            <person name="Lu L."/>
            <person name="Wang B."/>
            <person name="Pu S."/>
            <person name="Zhang X."/>
            <person name="Zhu G."/>
            <person name="Shi W."/>
            <person name="Zhang L."/>
            <person name="Wang H."/>
            <person name="Wang S."/>
            <person name="Zhao G."/>
            <person name="Zhang Y."/>
        </authorList>
    </citation>
    <scope>NUCLEOTIDE SEQUENCE [LARGE SCALE GENOMIC DNA]</scope>
    <source>
        <strain>ATCC 25177 / H37Ra</strain>
    </source>
</reference>